<organismHost>
    <name type="scientific">Acanthamoeba polyphaga</name>
    <name type="common">Amoeba</name>
    <dbReference type="NCBI Taxonomy" id="5757"/>
</organismHost>
<proteinExistence type="predicted"/>
<gene>
    <name type="ordered locus">MIMI_R314</name>
</gene>
<protein>
    <recommendedName>
        <fullName>Uncharacterized protein R314</fullName>
    </recommendedName>
</protein>
<sequence>MSIVNSELDKSISTHIINNTNIIMAHYCNGSCAHNAYHTGYDKGMAVGMLAQQLLQSACPPVGVRTSYDLWGTVQPVRRYTCSYQCPYAGGAECSMCFARRVNPSGSPTYNPGQNSAPTILLSLAPGTSLSIGGIKYI</sequence>
<reference key="1">
    <citation type="journal article" date="2004" name="Science">
        <title>The 1.2-megabase genome sequence of Mimivirus.</title>
        <authorList>
            <person name="Raoult D."/>
            <person name="Audic S."/>
            <person name="Robert C."/>
            <person name="Abergel C."/>
            <person name="Renesto P."/>
            <person name="Ogata H."/>
            <person name="La Scola B."/>
            <person name="Susan M."/>
            <person name="Claverie J.-M."/>
        </authorList>
    </citation>
    <scope>NUCLEOTIDE SEQUENCE [LARGE SCALE GENOMIC DNA]</scope>
    <source>
        <strain>Rowbotham-Bradford</strain>
    </source>
</reference>
<dbReference type="EMBL" id="AY653733">
    <property type="protein sequence ID" value="AAV50584.1"/>
    <property type="molecule type" value="Genomic_DNA"/>
</dbReference>
<dbReference type="KEGG" id="vg:9924931"/>
<dbReference type="Proteomes" id="UP000001134">
    <property type="component" value="Genome"/>
</dbReference>
<name>YR314_MIMIV</name>
<feature type="chain" id="PRO_0000253418" description="Uncharacterized protein R314">
    <location>
        <begin position="1"/>
        <end position="138"/>
    </location>
</feature>
<keyword id="KW-1185">Reference proteome</keyword>
<accession>Q5UQ01</accession>
<organism>
    <name type="scientific">Acanthamoeba polyphaga mimivirus</name>
    <name type="common">APMV</name>
    <dbReference type="NCBI Taxonomy" id="212035"/>
    <lineage>
        <taxon>Viruses</taxon>
        <taxon>Varidnaviria</taxon>
        <taxon>Bamfordvirae</taxon>
        <taxon>Nucleocytoviricota</taxon>
        <taxon>Megaviricetes</taxon>
        <taxon>Imitervirales</taxon>
        <taxon>Mimiviridae</taxon>
        <taxon>Megamimivirinae</taxon>
        <taxon>Mimivirus</taxon>
        <taxon>Mimivirus bradfordmassiliense</taxon>
    </lineage>
</organism>